<reference key="1">
    <citation type="submission" date="2007-09" db="EMBL/GenBank/DDBJ databases">
        <title>Complete genome sequencing of Rickettsia bellii.</title>
        <authorList>
            <person name="Madan A."/>
            <person name="Lee H."/>
            <person name="Madan A."/>
            <person name="Yoon J.-G."/>
            <person name="Ryu G.-Y."/>
            <person name="Dasch G."/>
            <person name="Ereemeva M."/>
        </authorList>
    </citation>
    <scope>NUCLEOTIDE SEQUENCE [LARGE SCALE GENOMIC DNA]</scope>
    <source>
        <strain>OSU 85-389</strain>
    </source>
</reference>
<keyword id="KW-0963">Cytoplasm</keyword>
<keyword id="KW-0274">FAD</keyword>
<keyword id="KW-0285">Flavoprotein</keyword>
<keyword id="KW-0520">NAD</keyword>
<keyword id="KW-0819">tRNA processing</keyword>
<protein>
    <recommendedName>
        <fullName evidence="1">tRNA uridine 5-carboxymethylaminomethyl modification enzyme MnmG</fullName>
    </recommendedName>
    <alternativeName>
        <fullName evidence="1">Glucose-inhibited division protein A</fullName>
    </alternativeName>
</protein>
<sequence length="621" mass="68732">MQKYDVIVIGGGHAGVEAAAASARLGVSTLLITPKSENLGEMSCNPAIGGIAKGTLVKEIDALDGLMGYVIDQAGIHYKMLNETRGPAVWGPRAQADRKLYKKAMYQILTNYPNLEILYAKVEDIEIKSSEIKAVILNNGSKIPCQKIILTTGTFLSGLIHIGSKKIPAGRVDEEPSYGLSNTLRRIGFKLSRLKTGTPPRIDGRTIDYSKVESQPGDKVPRPFSELTDNVNVPQINCFVTKTTTETHNVIRANLDKSAMYSGQIEGIGPRYCPSIEDKIVRFSTKSEHRIFLEPEGVDDHTIYPNGISTSLPEEVQHQLIKTIPGLENAIILRPGYAIEYDYIDPREISSTLETKKITGLYFAGQINGTTGYEEAAGQGIVAGINAALAVKNQPPFILTRANSYIGVMIDDLTSFGTLEPYRMFTSRSEYRLSIRADNADLRLTEMGISIGVISEKRKEIFTIKCKNIESTKSLLNTLCLTTSKLAKMGIQVAQDGTYKTVLDLFKIPNFDVEQAIKIFPVLKNVDNNILQLLYIEAKYASYLVRQYADINLFQSEEAQLIPKNIDYFKIPSISLEIQEKLSYNKPITIVAARRIPGVTPAAITAIIIYLKTKYNDRRST</sequence>
<proteinExistence type="inferred from homology"/>
<accession>A8GUR1</accession>
<comment type="function">
    <text evidence="1">NAD-binding protein involved in the addition of a carboxymethylaminomethyl (cmnm) group at the wobble position (U34) of certain tRNAs, forming tRNA-cmnm(5)s(2)U34.</text>
</comment>
<comment type="cofactor">
    <cofactor evidence="1">
        <name>FAD</name>
        <dbReference type="ChEBI" id="CHEBI:57692"/>
    </cofactor>
</comment>
<comment type="subunit">
    <text evidence="1">Homodimer. Heterotetramer of two MnmE and two MnmG subunits.</text>
</comment>
<comment type="subcellular location">
    <subcellularLocation>
        <location evidence="1">Cytoplasm</location>
    </subcellularLocation>
</comment>
<comment type="similarity">
    <text evidence="1">Belongs to the MnmG family.</text>
</comment>
<gene>
    <name evidence="1" type="primary">mnmG</name>
    <name evidence="1" type="synonym">gidA</name>
    <name type="ordered locus">A1I_00790</name>
</gene>
<evidence type="ECO:0000255" key="1">
    <source>
        <dbReference type="HAMAP-Rule" id="MF_00129"/>
    </source>
</evidence>
<organism>
    <name type="scientific">Rickettsia bellii (strain OSU 85-389)</name>
    <dbReference type="NCBI Taxonomy" id="391896"/>
    <lineage>
        <taxon>Bacteria</taxon>
        <taxon>Pseudomonadati</taxon>
        <taxon>Pseudomonadota</taxon>
        <taxon>Alphaproteobacteria</taxon>
        <taxon>Rickettsiales</taxon>
        <taxon>Rickettsiaceae</taxon>
        <taxon>Rickettsieae</taxon>
        <taxon>Rickettsia</taxon>
        <taxon>belli group</taxon>
    </lineage>
</organism>
<dbReference type="EMBL" id="CP000849">
    <property type="protein sequence ID" value="ABV78558.1"/>
    <property type="molecule type" value="Genomic_DNA"/>
</dbReference>
<dbReference type="RefSeq" id="WP_011478002.1">
    <property type="nucleotide sequence ID" value="NC_009883.1"/>
</dbReference>
<dbReference type="SMR" id="A8GUR1"/>
<dbReference type="KEGG" id="rbo:A1I_00790"/>
<dbReference type="HOGENOM" id="CLU_007831_2_2_5"/>
<dbReference type="GO" id="GO:0005829">
    <property type="term" value="C:cytosol"/>
    <property type="evidence" value="ECO:0007669"/>
    <property type="project" value="TreeGrafter"/>
</dbReference>
<dbReference type="GO" id="GO:0050660">
    <property type="term" value="F:flavin adenine dinucleotide binding"/>
    <property type="evidence" value="ECO:0007669"/>
    <property type="project" value="UniProtKB-UniRule"/>
</dbReference>
<dbReference type="GO" id="GO:0030488">
    <property type="term" value="P:tRNA methylation"/>
    <property type="evidence" value="ECO:0007669"/>
    <property type="project" value="TreeGrafter"/>
</dbReference>
<dbReference type="GO" id="GO:0002098">
    <property type="term" value="P:tRNA wobble uridine modification"/>
    <property type="evidence" value="ECO:0007669"/>
    <property type="project" value="InterPro"/>
</dbReference>
<dbReference type="FunFam" id="3.50.50.60:FF:000082">
    <property type="entry name" value="protein MTO1 homolog, mitochondrial isoform X1"/>
    <property type="match status" value="1"/>
</dbReference>
<dbReference type="FunFam" id="1.10.150.570:FF:000001">
    <property type="entry name" value="tRNA uridine 5-carboxymethylaminomethyl modification enzyme MnmG"/>
    <property type="match status" value="1"/>
</dbReference>
<dbReference type="FunFam" id="3.50.50.60:FF:000002">
    <property type="entry name" value="tRNA uridine 5-carboxymethylaminomethyl modification enzyme MnmG"/>
    <property type="match status" value="1"/>
</dbReference>
<dbReference type="Gene3D" id="3.50.50.60">
    <property type="entry name" value="FAD/NAD(P)-binding domain"/>
    <property type="match status" value="2"/>
</dbReference>
<dbReference type="Gene3D" id="1.10.150.570">
    <property type="entry name" value="GidA associated domain, C-terminal subdomain"/>
    <property type="match status" value="1"/>
</dbReference>
<dbReference type="HAMAP" id="MF_00129">
    <property type="entry name" value="MnmG_GidA"/>
    <property type="match status" value="1"/>
</dbReference>
<dbReference type="InterPro" id="IPR036188">
    <property type="entry name" value="FAD/NAD-bd_sf"/>
</dbReference>
<dbReference type="InterPro" id="IPR049312">
    <property type="entry name" value="GIDA_C_N"/>
</dbReference>
<dbReference type="InterPro" id="IPR004416">
    <property type="entry name" value="MnmG"/>
</dbReference>
<dbReference type="InterPro" id="IPR002218">
    <property type="entry name" value="MnmG-rel"/>
</dbReference>
<dbReference type="InterPro" id="IPR020595">
    <property type="entry name" value="MnmG-rel_CS"/>
</dbReference>
<dbReference type="InterPro" id="IPR026904">
    <property type="entry name" value="MnmG_C"/>
</dbReference>
<dbReference type="InterPro" id="IPR047001">
    <property type="entry name" value="MnmG_C_subdom"/>
</dbReference>
<dbReference type="InterPro" id="IPR044920">
    <property type="entry name" value="MnmG_C_subdom_sf"/>
</dbReference>
<dbReference type="InterPro" id="IPR040131">
    <property type="entry name" value="MnmG_N"/>
</dbReference>
<dbReference type="NCBIfam" id="TIGR00136">
    <property type="entry name" value="mnmG_gidA"/>
    <property type="match status" value="1"/>
</dbReference>
<dbReference type="PANTHER" id="PTHR11806">
    <property type="entry name" value="GLUCOSE INHIBITED DIVISION PROTEIN A"/>
    <property type="match status" value="1"/>
</dbReference>
<dbReference type="PANTHER" id="PTHR11806:SF0">
    <property type="entry name" value="PROTEIN MTO1 HOMOLOG, MITOCHONDRIAL"/>
    <property type="match status" value="1"/>
</dbReference>
<dbReference type="Pfam" id="PF01134">
    <property type="entry name" value="GIDA"/>
    <property type="match status" value="1"/>
</dbReference>
<dbReference type="Pfam" id="PF21680">
    <property type="entry name" value="GIDA_C_1st"/>
    <property type="match status" value="1"/>
</dbReference>
<dbReference type="Pfam" id="PF13932">
    <property type="entry name" value="SAM_GIDA_C"/>
    <property type="match status" value="1"/>
</dbReference>
<dbReference type="PRINTS" id="PR00411">
    <property type="entry name" value="PNDRDTASEI"/>
</dbReference>
<dbReference type="SMART" id="SM01228">
    <property type="entry name" value="GIDA_assoc_3"/>
    <property type="match status" value="1"/>
</dbReference>
<dbReference type="SUPFAM" id="SSF51905">
    <property type="entry name" value="FAD/NAD(P)-binding domain"/>
    <property type="match status" value="1"/>
</dbReference>
<dbReference type="PROSITE" id="PS01280">
    <property type="entry name" value="GIDA_1"/>
    <property type="match status" value="1"/>
</dbReference>
<dbReference type="PROSITE" id="PS01281">
    <property type="entry name" value="GIDA_2"/>
    <property type="match status" value="1"/>
</dbReference>
<name>MNMG_RICB8</name>
<feature type="chain" id="PRO_1000016664" description="tRNA uridine 5-carboxymethylaminomethyl modification enzyme MnmG">
    <location>
        <begin position="1"/>
        <end position="621"/>
    </location>
</feature>
<feature type="binding site" evidence="1">
    <location>
        <begin position="10"/>
        <end position="15"/>
    </location>
    <ligand>
        <name>FAD</name>
        <dbReference type="ChEBI" id="CHEBI:57692"/>
    </ligand>
</feature>
<feature type="binding site" evidence="1">
    <location>
        <position position="122"/>
    </location>
    <ligand>
        <name>FAD</name>
        <dbReference type="ChEBI" id="CHEBI:57692"/>
    </ligand>
</feature>
<feature type="binding site" evidence="1">
    <location>
        <position position="177"/>
    </location>
    <ligand>
        <name>FAD</name>
        <dbReference type="ChEBI" id="CHEBI:57692"/>
    </ligand>
</feature>
<feature type="binding site" evidence="1">
    <location>
        <begin position="269"/>
        <end position="283"/>
    </location>
    <ligand>
        <name>NAD(+)</name>
        <dbReference type="ChEBI" id="CHEBI:57540"/>
    </ligand>
</feature>
<feature type="binding site" evidence="1">
    <location>
        <position position="366"/>
    </location>
    <ligand>
        <name>FAD</name>
        <dbReference type="ChEBI" id="CHEBI:57692"/>
    </ligand>
</feature>